<sequence>MVLKWVMSTKYVEAGELKEGSYVVIDGEPCRVVEIEKSKTGKHGSAKARIVAVGVFDGGKRTLSLPVDAQVEVPIIEKFTAQILSVSGDVIQLMDMRDYKTIEVPMKYVEEEAKGRLAPGAEVEVWQILDRYKIIRVK</sequence>
<name>IF5A_PYRAE</name>
<dbReference type="EMBL" id="AE009441">
    <property type="protein sequence ID" value="AAL64850.1"/>
    <property type="status" value="ALT_INIT"/>
    <property type="molecule type" value="Genomic_DNA"/>
</dbReference>
<dbReference type="PDB" id="1BKB">
    <property type="method" value="X-ray"/>
    <property type="resolution" value="1.75 A"/>
    <property type="chains" value="A=4-138"/>
</dbReference>
<dbReference type="PDBsum" id="1BKB"/>
<dbReference type="SMR" id="P56635"/>
<dbReference type="FunCoup" id="P56635">
    <property type="interactions" value="170"/>
</dbReference>
<dbReference type="STRING" id="178306.PAE3337"/>
<dbReference type="EnsemblBacteria" id="AAL64850">
    <property type="protein sequence ID" value="AAL64850"/>
    <property type="gene ID" value="PAE3337"/>
</dbReference>
<dbReference type="KEGG" id="pai:PAE3337"/>
<dbReference type="PATRIC" id="fig|178306.9.peg.2514"/>
<dbReference type="eggNOG" id="arCOG04277">
    <property type="taxonomic scope" value="Archaea"/>
</dbReference>
<dbReference type="HOGENOM" id="CLU_102600_3_0_2"/>
<dbReference type="InParanoid" id="P56635"/>
<dbReference type="EvolutionaryTrace" id="P56635"/>
<dbReference type="Proteomes" id="UP000002439">
    <property type="component" value="Chromosome"/>
</dbReference>
<dbReference type="GO" id="GO:0005737">
    <property type="term" value="C:cytoplasm"/>
    <property type="evidence" value="ECO:0007669"/>
    <property type="project" value="UniProtKB-SubCell"/>
</dbReference>
<dbReference type="GO" id="GO:0043022">
    <property type="term" value="F:ribosome binding"/>
    <property type="evidence" value="ECO:0007669"/>
    <property type="project" value="InterPro"/>
</dbReference>
<dbReference type="GO" id="GO:0003723">
    <property type="term" value="F:RNA binding"/>
    <property type="evidence" value="ECO:0007669"/>
    <property type="project" value="InterPro"/>
</dbReference>
<dbReference type="GO" id="GO:0003746">
    <property type="term" value="F:translation elongation factor activity"/>
    <property type="evidence" value="ECO:0000318"/>
    <property type="project" value="GO_Central"/>
</dbReference>
<dbReference type="GO" id="GO:0003743">
    <property type="term" value="F:translation initiation factor activity"/>
    <property type="evidence" value="ECO:0007669"/>
    <property type="project" value="UniProtKB-UniRule"/>
</dbReference>
<dbReference type="GO" id="GO:0045901">
    <property type="term" value="P:positive regulation of translational elongation"/>
    <property type="evidence" value="ECO:0007669"/>
    <property type="project" value="InterPro"/>
</dbReference>
<dbReference type="GO" id="GO:0045905">
    <property type="term" value="P:positive regulation of translational termination"/>
    <property type="evidence" value="ECO:0007669"/>
    <property type="project" value="InterPro"/>
</dbReference>
<dbReference type="GO" id="GO:0006414">
    <property type="term" value="P:translational elongation"/>
    <property type="evidence" value="ECO:0000318"/>
    <property type="project" value="GO_Central"/>
</dbReference>
<dbReference type="CDD" id="cd04467">
    <property type="entry name" value="S1_aIF5A"/>
    <property type="match status" value="1"/>
</dbReference>
<dbReference type="FunFam" id="2.30.30.30:FF:000038">
    <property type="entry name" value="Translation initiation factor 5A"/>
    <property type="match status" value="1"/>
</dbReference>
<dbReference type="Gene3D" id="2.30.30.30">
    <property type="match status" value="1"/>
</dbReference>
<dbReference type="Gene3D" id="2.40.50.140">
    <property type="entry name" value="Nucleic acid-binding proteins"/>
    <property type="match status" value="1"/>
</dbReference>
<dbReference type="HAMAP" id="MF_00085">
    <property type="entry name" value="eIF_5A"/>
    <property type="match status" value="1"/>
</dbReference>
<dbReference type="InterPro" id="IPR001884">
    <property type="entry name" value="IF5A-like"/>
</dbReference>
<dbReference type="InterPro" id="IPR048670">
    <property type="entry name" value="IF5A-like_N"/>
</dbReference>
<dbReference type="InterPro" id="IPR012340">
    <property type="entry name" value="NA-bd_OB-fold"/>
</dbReference>
<dbReference type="InterPro" id="IPR014722">
    <property type="entry name" value="Rib_uL2_dom2"/>
</dbReference>
<dbReference type="InterPro" id="IPR019769">
    <property type="entry name" value="Trans_elong_IF5A_hypusine_site"/>
</dbReference>
<dbReference type="InterPro" id="IPR022847">
    <property type="entry name" value="Transl_elong_IF5A_arc"/>
</dbReference>
<dbReference type="InterPro" id="IPR020189">
    <property type="entry name" value="Transl_elong_IF5A_C"/>
</dbReference>
<dbReference type="InterPro" id="IPR008991">
    <property type="entry name" value="Translation_prot_SH3-like_sf"/>
</dbReference>
<dbReference type="NCBIfam" id="TIGR00037">
    <property type="entry name" value="eIF_5A"/>
    <property type="match status" value="1"/>
</dbReference>
<dbReference type="NCBIfam" id="NF003076">
    <property type="entry name" value="PRK03999.1"/>
    <property type="match status" value="1"/>
</dbReference>
<dbReference type="PANTHER" id="PTHR11673">
    <property type="entry name" value="TRANSLATION INITIATION FACTOR 5A FAMILY MEMBER"/>
    <property type="match status" value="1"/>
</dbReference>
<dbReference type="Pfam" id="PF01287">
    <property type="entry name" value="eIF-5a"/>
    <property type="match status" value="1"/>
</dbReference>
<dbReference type="Pfam" id="PF21485">
    <property type="entry name" value="IF5A-like_N"/>
    <property type="match status" value="1"/>
</dbReference>
<dbReference type="PIRSF" id="PIRSF003025">
    <property type="entry name" value="eIF5A"/>
    <property type="match status" value="1"/>
</dbReference>
<dbReference type="SMART" id="SM01376">
    <property type="entry name" value="eIF-5a"/>
    <property type="match status" value="1"/>
</dbReference>
<dbReference type="SUPFAM" id="SSF50249">
    <property type="entry name" value="Nucleic acid-binding proteins"/>
    <property type="match status" value="1"/>
</dbReference>
<dbReference type="SUPFAM" id="SSF50104">
    <property type="entry name" value="Translation proteins SH3-like domain"/>
    <property type="match status" value="1"/>
</dbReference>
<dbReference type="PROSITE" id="PS00302">
    <property type="entry name" value="IF5A_HYPUSINE"/>
    <property type="match status" value="1"/>
</dbReference>
<proteinExistence type="evidence at protein level"/>
<comment type="function">
    <text>Functions by promoting the formation of the first peptide bond.</text>
</comment>
<comment type="subcellular location">
    <subcellularLocation>
        <location>Cytoplasm</location>
    </subcellularLocation>
</comment>
<comment type="similarity">
    <text evidence="2">Belongs to the eIF-5A family.</text>
</comment>
<comment type="sequence caution" evidence="2">
    <conflict type="erroneous initiation">
        <sequence resource="EMBL-CDS" id="AAL64850"/>
    </conflict>
</comment>
<gene>
    <name type="primary">eif5a</name>
    <name type="ordered locus">PAE3337</name>
</gene>
<accession>P56635</accession>
<feature type="chain" id="PRO_0000142499" description="Translation initiation factor 5A">
    <location>
        <begin position="1"/>
        <end position="138"/>
    </location>
</feature>
<feature type="modified residue" description="Hypusine" evidence="1">
    <location>
        <position position="42"/>
    </location>
</feature>
<feature type="strand" evidence="3">
    <location>
        <begin position="10"/>
        <end position="13"/>
    </location>
</feature>
<feature type="helix" evidence="3">
    <location>
        <begin position="14"/>
        <end position="16"/>
    </location>
</feature>
<feature type="strand" evidence="3">
    <location>
        <begin position="22"/>
        <end position="25"/>
    </location>
</feature>
<feature type="strand" evidence="3">
    <location>
        <begin position="28"/>
        <end position="38"/>
    </location>
</feature>
<feature type="strand" evidence="3">
    <location>
        <begin position="47"/>
        <end position="54"/>
    </location>
</feature>
<feature type="turn" evidence="3">
    <location>
        <begin position="55"/>
        <end position="57"/>
    </location>
</feature>
<feature type="strand" evidence="3">
    <location>
        <begin position="60"/>
        <end position="66"/>
    </location>
</feature>
<feature type="strand" evidence="3">
    <location>
        <begin position="69"/>
        <end position="73"/>
    </location>
</feature>
<feature type="strand" evidence="3">
    <location>
        <begin position="77"/>
        <end position="86"/>
    </location>
</feature>
<feature type="strand" evidence="3">
    <location>
        <begin position="88"/>
        <end position="95"/>
    </location>
</feature>
<feature type="turn" evidence="3">
    <location>
        <begin position="96"/>
        <end position="98"/>
    </location>
</feature>
<feature type="strand" evidence="3">
    <location>
        <begin position="101"/>
        <end position="105"/>
    </location>
</feature>
<feature type="helix" evidence="3">
    <location>
        <begin position="106"/>
        <end position="108"/>
    </location>
</feature>
<feature type="helix" evidence="3">
    <location>
        <begin position="111"/>
        <end position="114"/>
    </location>
</feature>
<feature type="strand" evidence="3">
    <location>
        <begin position="122"/>
        <end position="128"/>
    </location>
</feature>
<feature type="strand" evidence="3">
    <location>
        <begin position="131"/>
        <end position="137"/>
    </location>
</feature>
<protein>
    <recommendedName>
        <fullName>Translation initiation factor 5A</fullName>
    </recommendedName>
    <alternativeName>
        <fullName>Hypusine-containing protein</fullName>
    </alternativeName>
    <alternativeName>
        <fullName>eIF-5A</fullName>
    </alternativeName>
</protein>
<reference key="1">
    <citation type="journal article" date="2002" name="Proc. Natl. Acad. Sci. U.S.A.">
        <title>Genome sequence of the hyperthermophilic crenarchaeon Pyrobaculum aerophilum.</title>
        <authorList>
            <person name="Fitz-Gibbon S.T."/>
            <person name="Ladner H."/>
            <person name="Kim U.-J."/>
            <person name="Stetter K.O."/>
            <person name="Simon M.I."/>
            <person name="Miller J.H."/>
        </authorList>
    </citation>
    <scope>NUCLEOTIDE SEQUENCE [LARGE SCALE GENOMIC DNA]</scope>
    <source>
        <strain>ATCC 51768 / DSM 7523 / JCM 9630 / CIP 104966 / NBRC 100827 / IM2</strain>
    </source>
</reference>
<reference key="2">
    <citation type="journal article" date="1998" name="Structure">
        <title>Structure of translation initiation factor 5A from Pyrobaculum aerophilum at 1.75-A resolution.</title>
        <authorList>
            <person name="Peat T.S."/>
            <person name="Newman J."/>
            <person name="Waldo G.S."/>
            <person name="Berendzen J."/>
            <person name="Terwilliger T.C."/>
        </authorList>
    </citation>
    <scope>X-RAY CRYSTALLOGRAPHY (1.75 ANGSTROMS)</scope>
    <scope>HYPUSINE AT LYS-42</scope>
</reference>
<keyword id="KW-0002">3D-structure</keyword>
<keyword id="KW-0963">Cytoplasm</keyword>
<keyword id="KW-0385">Hypusine</keyword>
<keyword id="KW-0396">Initiation factor</keyword>
<keyword id="KW-0648">Protein biosynthesis</keyword>
<keyword id="KW-1185">Reference proteome</keyword>
<evidence type="ECO:0000269" key="1">
    <source>
    </source>
</evidence>
<evidence type="ECO:0000305" key="2"/>
<evidence type="ECO:0007829" key="3">
    <source>
        <dbReference type="PDB" id="1BKB"/>
    </source>
</evidence>
<organism>
    <name type="scientific">Pyrobaculum aerophilum (strain ATCC 51768 / DSM 7523 / JCM 9630 / CIP 104966 / NBRC 100827 / IM2)</name>
    <dbReference type="NCBI Taxonomy" id="178306"/>
    <lineage>
        <taxon>Archaea</taxon>
        <taxon>Thermoproteota</taxon>
        <taxon>Thermoprotei</taxon>
        <taxon>Thermoproteales</taxon>
        <taxon>Thermoproteaceae</taxon>
        <taxon>Pyrobaculum</taxon>
    </lineage>
</organism>